<name>ATPB_RICAH</name>
<evidence type="ECO:0000255" key="1">
    <source>
        <dbReference type="HAMAP-Rule" id="MF_01347"/>
    </source>
</evidence>
<sequence length="473" mass="51006">MTKNIGKITQIISAVVDVKFTNNGELPEILNALECYNDKQRIVLEVAQHIGDDTVRCIAMDSTEGLVRGVEVMDTGSPICIPVGTETLGRIMNVVGEPIDGKGDIKSSNISAIYKSAPDFTNQSTERNILVTGIKVVDLLAPYIKGGKIGLFGGAGVGKTVLIMELINNVAKAHGGYTVFAGVGERTREGNDLYHEMIDSGVIDLEKPENSKVALVYGQMNAPPGARARVALSGLTIAESFRDMNGGQDVLFFVDNIFRFTQAGSEVSALLGRIPSAVGYQPTLATDMGELQERITSTKHGSITSVQAIYVPADDLTDPAPATSFAHLDATTVLSRQIAEFGIYPAVDPLDSNSQVLDPMIVGEEHYSVARQVQQVLQTYKSLQDIIAILGMDELSEEDKLTVSRARKIQRFLSQPFHVAEVFTGSEGKFVNLADTIAGFKGLVEGKYDDLPEAAFYMVGTIDEAIEKAKILK</sequence>
<organism>
    <name type="scientific">Rickettsia akari (strain Hartford)</name>
    <dbReference type="NCBI Taxonomy" id="293614"/>
    <lineage>
        <taxon>Bacteria</taxon>
        <taxon>Pseudomonadati</taxon>
        <taxon>Pseudomonadota</taxon>
        <taxon>Alphaproteobacteria</taxon>
        <taxon>Rickettsiales</taxon>
        <taxon>Rickettsiaceae</taxon>
        <taxon>Rickettsieae</taxon>
        <taxon>Rickettsia</taxon>
        <taxon>spotted fever group</taxon>
    </lineage>
</organism>
<reference key="1">
    <citation type="submission" date="2007-09" db="EMBL/GenBank/DDBJ databases">
        <title>Complete genome sequence of Rickettsia akari.</title>
        <authorList>
            <person name="Madan A."/>
            <person name="Fahey J."/>
            <person name="Helton E."/>
            <person name="Ketteman M."/>
            <person name="Madan A."/>
            <person name="Rodrigues S."/>
            <person name="Sanchez A."/>
            <person name="Whiting M."/>
            <person name="Dasch G."/>
            <person name="Eremeeva M."/>
        </authorList>
    </citation>
    <scope>NUCLEOTIDE SEQUENCE [LARGE SCALE GENOMIC DNA]</scope>
    <source>
        <strain>Hartford</strain>
    </source>
</reference>
<protein>
    <recommendedName>
        <fullName evidence="1">ATP synthase subunit beta</fullName>
        <ecNumber evidence="1">7.1.2.2</ecNumber>
    </recommendedName>
    <alternativeName>
        <fullName evidence="1">ATP synthase F1 sector subunit beta</fullName>
    </alternativeName>
    <alternativeName>
        <fullName evidence="1">F-ATPase subunit beta</fullName>
    </alternativeName>
</protein>
<gene>
    <name evidence="1" type="primary">atpD</name>
    <name type="ordered locus">A1C_06190</name>
</gene>
<proteinExistence type="inferred from homology"/>
<feature type="chain" id="PRO_1000055152" description="ATP synthase subunit beta">
    <location>
        <begin position="1"/>
        <end position="473"/>
    </location>
</feature>
<feature type="binding site" evidence="1">
    <location>
        <begin position="153"/>
        <end position="160"/>
    </location>
    <ligand>
        <name>ATP</name>
        <dbReference type="ChEBI" id="CHEBI:30616"/>
    </ligand>
</feature>
<dbReference type="EC" id="7.1.2.2" evidence="1"/>
<dbReference type="EMBL" id="CP000847">
    <property type="protein sequence ID" value="ABV75469.1"/>
    <property type="molecule type" value="Genomic_DNA"/>
</dbReference>
<dbReference type="RefSeq" id="WP_012150098.1">
    <property type="nucleotide sequence ID" value="NC_009881.1"/>
</dbReference>
<dbReference type="SMR" id="A8GPZ4"/>
<dbReference type="STRING" id="293614.A1C_06190"/>
<dbReference type="KEGG" id="rak:A1C_06190"/>
<dbReference type="eggNOG" id="COG0055">
    <property type="taxonomic scope" value="Bacteria"/>
</dbReference>
<dbReference type="HOGENOM" id="CLU_022398_0_2_5"/>
<dbReference type="Proteomes" id="UP000006830">
    <property type="component" value="Chromosome"/>
</dbReference>
<dbReference type="GO" id="GO:0005886">
    <property type="term" value="C:plasma membrane"/>
    <property type="evidence" value="ECO:0007669"/>
    <property type="project" value="UniProtKB-SubCell"/>
</dbReference>
<dbReference type="GO" id="GO:0045259">
    <property type="term" value="C:proton-transporting ATP synthase complex"/>
    <property type="evidence" value="ECO:0007669"/>
    <property type="project" value="UniProtKB-KW"/>
</dbReference>
<dbReference type="GO" id="GO:0005524">
    <property type="term" value="F:ATP binding"/>
    <property type="evidence" value="ECO:0007669"/>
    <property type="project" value="UniProtKB-UniRule"/>
</dbReference>
<dbReference type="GO" id="GO:0016887">
    <property type="term" value="F:ATP hydrolysis activity"/>
    <property type="evidence" value="ECO:0007669"/>
    <property type="project" value="InterPro"/>
</dbReference>
<dbReference type="GO" id="GO:0046933">
    <property type="term" value="F:proton-transporting ATP synthase activity, rotational mechanism"/>
    <property type="evidence" value="ECO:0007669"/>
    <property type="project" value="UniProtKB-UniRule"/>
</dbReference>
<dbReference type="CDD" id="cd18110">
    <property type="entry name" value="ATP-synt_F1_beta_C"/>
    <property type="match status" value="1"/>
</dbReference>
<dbReference type="CDD" id="cd18115">
    <property type="entry name" value="ATP-synt_F1_beta_N"/>
    <property type="match status" value="1"/>
</dbReference>
<dbReference type="CDD" id="cd01133">
    <property type="entry name" value="F1-ATPase_beta_CD"/>
    <property type="match status" value="1"/>
</dbReference>
<dbReference type="FunFam" id="1.10.1140.10:FF:000001">
    <property type="entry name" value="ATP synthase subunit beta"/>
    <property type="match status" value="1"/>
</dbReference>
<dbReference type="FunFam" id="2.40.10.170:FF:000014">
    <property type="entry name" value="ATP synthase subunit beta"/>
    <property type="match status" value="1"/>
</dbReference>
<dbReference type="FunFam" id="3.40.50.300:FF:000026">
    <property type="entry name" value="ATP synthase subunit beta"/>
    <property type="match status" value="1"/>
</dbReference>
<dbReference type="Gene3D" id="2.40.10.170">
    <property type="match status" value="1"/>
</dbReference>
<dbReference type="Gene3D" id="1.10.1140.10">
    <property type="entry name" value="Bovine Mitochondrial F1-atpase, Atp Synthase Beta Chain, Chain D, domain 3"/>
    <property type="match status" value="1"/>
</dbReference>
<dbReference type="Gene3D" id="3.40.50.300">
    <property type="entry name" value="P-loop containing nucleotide triphosphate hydrolases"/>
    <property type="match status" value="1"/>
</dbReference>
<dbReference type="HAMAP" id="MF_01347">
    <property type="entry name" value="ATP_synth_beta_bact"/>
    <property type="match status" value="1"/>
</dbReference>
<dbReference type="InterPro" id="IPR003593">
    <property type="entry name" value="AAA+_ATPase"/>
</dbReference>
<dbReference type="InterPro" id="IPR055190">
    <property type="entry name" value="ATP-synt_VA_C"/>
</dbReference>
<dbReference type="InterPro" id="IPR005722">
    <property type="entry name" value="ATP_synth_F1_bsu"/>
</dbReference>
<dbReference type="InterPro" id="IPR020003">
    <property type="entry name" value="ATPase_a/bsu_AS"/>
</dbReference>
<dbReference type="InterPro" id="IPR050053">
    <property type="entry name" value="ATPase_alpha/beta_chains"/>
</dbReference>
<dbReference type="InterPro" id="IPR004100">
    <property type="entry name" value="ATPase_F1/V1/A1_a/bsu_N"/>
</dbReference>
<dbReference type="InterPro" id="IPR036121">
    <property type="entry name" value="ATPase_F1/V1/A1_a/bsu_N_sf"/>
</dbReference>
<dbReference type="InterPro" id="IPR000194">
    <property type="entry name" value="ATPase_F1/V1/A1_a/bsu_nucl-bd"/>
</dbReference>
<dbReference type="InterPro" id="IPR024034">
    <property type="entry name" value="ATPase_F1/V1_b/a_C"/>
</dbReference>
<dbReference type="InterPro" id="IPR027417">
    <property type="entry name" value="P-loop_NTPase"/>
</dbReference>
<dbReference type="NCBIfam" id="TIGR01039">
    <property type="entry name" value="atpD"/>
    <property type="match status" value="1"/>
</dbReference>
<dbReference type="PANTHER" id="PTHR15184">
    <property type="entry name" value="ATP SYNTHASE"/>
    <property type="match status" value="1"/>
</dbReference>
<dbReference type="PANTHER" id="PTHR15184:SF71">
    <property type="entry name" value="ATP SYNTHASE SUBUNIT BETA, MITOCHONDRIAL"/>
    <property type="match status" value="1"/>
</dbReference>
<dbReference type="Pfam" id="PF00006">
    <property type="entry name" value="ATP-synt_ab"/>
    <property type="match status" value="1"/>
</dbReference>
<dbReference type="Pfam" id="PF02874">
    <property type="entry name" value="ATP-synt_ab_N"/>
    <property type="match status" value="1"/>
</dbReference>
<dbReference type="Pfam" id="PF22919">
    <property type="entry name" value="ATP-synt_VA_C"/>
    <property type="match status" value="1"/>
</dbReference>
<dbReference type="PIRSF" id="PIRSF039072">
    <property type="entry name" value="ATPase_subunit_beta"/>
    <property type="match status" value="1"/>
</dbReference>
<dbReference type="SMART" id="SM00382">
    <property type="entry name" value="AAA"/>
    <property type="match status" value="1"/>
</dbReference>
<dbReference type="SUPFAM" id="SSF47917">
    <property type="entry name" value="C-terminal domain of alpha and beta subunits of F1 ATP synthase"/>
    <property type="match status" value="1"/>
</dbReference>
<dbReference type="SUPFAM" id="SSF50615">
    <property type="entry name" value="N-terminal domain of alpha and beta subunits of F1 ATP synthase"/>
    <property type="match status" value="1"/>
</dbReference>
<dbReference type="SUPFAM" id="SSF52540">
    <property type="entry name" value="P-loop containing nucleoside triphosphate hydrolases"/>
    <property type="match status" value="1"/>
</dbReference>
<dbReference type="PROSITE" id="PS00152">
    <property type="entry name" value="ATPASE_ALPHA_BETA"/>
    <property type="match status" value="1"/>
</dbReference>
<keyword id="KW-0066">ATP synthesis</keyword>
<keyword id="KW-0067">ATP-binding</keyword>
<keyword id="KW-0997">Cell inner membrane</keyword>
<keyword id="KW-1003">Cell membrane</keyword>
<keyword id="KW-0139">CF(1)</keyword>
<keyword id="KW-0375">Hydrogen ion transport</keyword>
<keyword id="KW-0406">Ion transport</keyword>
<keyword id="KW-0472">Membrane</keyword>
<keyword id="KW-0547">Nucleotide-binding</keyword>
<keyword id="KW-1278">Translocase</keyword>
<keyword id="KW-0813">Transport</keyword>
<accession>A8GPZ4</accession>
<comment type="function">
    <text evidence="1">Produces ATP from ADP in the presence of a proton gradient across the membrane. The catalytic sites are hosted primarily by the beta subunits.</text>
</comment>
<comment type="catalytic activity">
    <reaction evidence="1">
        <text>ATP + H2O + 4 H(+)(in) = ADP + phosphate + 5 H(+)(out)</text>
        <dbReference type="Rhea" id="RHEA:57720"/>
        <dbReference type="ChEBI" id="CHEBI:15377"/>
        <dbReference type="ChEBI" id="CHEBI:15378"/>
        <dbReference type="ChEBI" id="CHEBI:30616"/>
        <dbReference type="ChEBI" id="CHEBI:43474"/>
        <dbReference type="ChEBI" id="CHEBI:456216"/>
        <dbReference type="EC" id="7.1.2.2"/>
    </reaction>
</comment>
<comment type="subunit">
    <text evidence="1">F-type ATPases have 2 components, CF(1) - the catalytic core - and CF(0) - the membrane proton channel. CF(1) has five subunits: alpha(3), beta(3), gamma(1), delta(1), epsilon(1). CF(0) has three main subunits: a(1), b(2) and c(9-12). The alpha and beta chains form an alternating ring which encloses part of the gamma chain. CF(1) is attached to CF(0) by a central stalk formed by the gamma and epsilon chains, while a peripheral stalk is formed by the delta and b chains.</text>
</comment>
<comment type="subcellular location">
    <subcellularLocation>
        <location evidence="1">Cell inner membrane</location>
        <topology evidence="1">Peripheral membrane protein</topology>
    </subcellularLocation>
</comment>
<comment type="similarity">
    <text evidence="1">Belongs to the ATPase alpha/beta chains family.</text>
</comment>